<accession>A1CRV0</accession>
<comment type="function">
    <text evidence="1">Beta-glucanases participate in the metabolism of beta-glucan, the main structural component of the cell wall. It could also function biosynthetically as a transglycosylase (By similarity).</text>
</comment>
<comment type="catalytic activity">
    <reaction>
        <text>Successive hydrolysis of beta-D-glucose units from the non-reducing ends of (1-&gt;3)-beta-D-glucans, releasing alpha-glucose.</text>
        <dbReference type="EC" id="3.2.1.58"/>
    </reaction>
</comment>
<comment type="cofactor">
    <cofactor evidence="1">
        <name>Mn(2+)</name>
        <dbReference type="ChEBI" id="CHEBI:29035"/>
    </cofactor>
</comment>
<comment type="subunit">
    <text evidence="1">Monomer.</text>
</comment>
<comment type="subcellular location">
    <subcellularLocation>
        <location evidence="1">Secreted</location>
    </subcellularLocation>
</comment>
<comment type="similarity">
    <text evidence="4">Belongs to the glycosyl hydrolase 5 (cellulase A) family.</text>
</comment>
<comment type="sequence caution" evidence="4">
    <conflict type="erroneous gene model prediction">
        <sequence resource="EMBL-CDS" id="EAW08371"/>
    </conflict>
</comment>
<name>EXGA_ASPCL</name>
<evidence type="ECO:0000250" key="1"/>
<evidence type="ECO:0000255" key="2"/>
<evidence type="ECO:0000256" key="3">
    <source>
        <dbReference type="SAM" id="MobiDB-lite"/>
    </source>
</evidence>
<evidence type="ECO:0000305" key="4"/>
<sequence length="415" mass="45665">MLSRLSQTALVALSLMTVLTEAVPSRMRIQTRDSVNYQSEIVRGVNLGGWLVLEPWITPSIFENGGGAAVDEWTLAEVLGKDKARAILSQHWSSFITQDDFNQIAQAGMNHVRIPVGYWAVSAPDEPYVDGQLEFLDNAISWARAAGLKVMIDLHGAPGSQNGFDNSGRKGPIAWQQGDTVARTVDAFKALAERYLPESDVVTAIEAVNEPNIPGGVNEGQLKEYYNQVLEVVHSINPDAGVFLSDGFLATASWNGYANGENVVMDTHHYHMFDNTLISLDINAHVRAACEFGNQIKGSDKPVVVGEWTGALTDCTKHLNGKDIPTRYEGQWANSPRYGDCGNKRQGSSSGLSEQERSDTRRFIEAQLDAYEGKNGWLFWTWKTEGAPGWDMQDLLANGLFPNPPTERQYGNQCA</sequence>
<feature type="signal peptide" evidence="2">
    <location>
        <begin position="1"/>
        <end position="22"/>
    </location>
</feature>
<feature type="chain" id="PRO_0000393527" description="Probable glucan 1,3-beta-glucosidase A">
    <location>
        <begin position="23"/>
        <end position="415"/>
    </location>
</feature>
<feature type="region of interest" description="Disordered" evidence="3">
    <location>
        <begin position="335"/>
        <end position="359"/>
    </location>
</feature>
<feature type="active site" description="Proton donor" evidence="1">
    <location>
        <position position="210"/>
    </location>
</feature>
<feature type="active site" description="Nucleophile" evidence="1">
    <location>
        <position position="307"/>
    </location>
</feature>
<feature type="disulfide bond" evidence="1">
    <location>
        <begin position="290"/>
        <end position="414"/>
    </location>
</feature>
<feature type="disulfide bond" evidence="1">
    <location>
        <begin position="315"/>
        <end position="341"/>
    </location>
</feature>
<organism>
    <name type="scientific">Aspergillus clavatus (strain ATCC 1007 / CBS 513.65 / DSM 816 / NCTC 3887 / NRRL 1 / QM 1276 / 107)</name>
    <dbReference type="NCBI Taxonomy" id="344612"/>
    <lineage>
        <taxon>Eukaryota</taxon>
        <taxon>Fungi</taxon>
        <taxon>Dikarya</taxon>
        <taxon>Ascomycota</taxon>
        <taxon>Pezizomycotina</taxon>
        <taxon>Eurotiomycetes</taxon>
        <taxon>Eurotiomycetidae</taxon>
        <taxon>Eurotiales</taxon>
        <taxon>Aspergillaceae</taxon>
        <taxon>Aspergillus</taxon>
        <taxon>Aspergillus subgen. Fumigati</taxon>
    </lineage>
</organism>
<proteinExistence type="inferred from homology"/>
<dbReference type="EC" id="3.2.1.58"/>
<dbReference type="EMBL" id="DS027059">
    <property type="protein sequence ID" value="EAW08371.1"/>
    <property type="status" value="ALT_SEQ"/>
    <property type="molecule type" value="Genomic_DNA"/>
</dbReference>
<dbReference type="RefSeq" id="XP_001269797.1">
    <property type="nucleotide sequence ID" value="XM_001269796.1"/>
</dbReference>
<dbReference type="SMR" id="A1CRV0"/>
<dbReference type="STRING" id="344612.A1CRV0"/>
<dbReference type="GeneID" id="4700820"/>
<dbReference type="KEGG" id="act:ACLA_031040"/>
<dbReference type="eggNOG" id="ENOG502QPYU">
    <property type="taxonomic scope" value="Eukaryota"/>
</dbReference>
<dbReference type="OrthoDB" id="62120at2759"/>
<dbReference type="Proteomes" id="UP000006701">
    <property type="component" value="Unassembled WGS sequence"/>
</dbReference>
<dbReference type="GO" id="GO:0009986">
    <property type="term" value="C:cell surface"/>
    <property type="evidence" value="ECO:0007669"/>
    <property type="project" value="TreeGrafter"/>
</dbReference>
<dbReference type="GO" id="GO:0005576">
    <property type="term" value="C:extracellular region"/>
    <property type="evidence" value="ECO:0007669"/>
    <property type="project" value="UniProtKB-SubCell"/>
</dbReference>
<dbReference type="GO" id="GO:0004338">
    <property type="term" value="F:glucan exo-1,3-beta-glucosidase activity"/>
    <property type="evidence" value="ECO:0007669"/>
    <property type="project" value="UniProtKB-EC"/>
</dbReference>
<dbReference type="GO" id="GO:0046872">
    <property type="term" value="F:metal ion binding"/>
    <property type="evidence" value="ECO:0007669"/>
    <property type="project" value="UniProtKB-KW"/>
</dbReference>
<dbReference type="GO" id="GO:0071555">
    <property type="term" value="P:cell wall organization"/>
    <property type="evidence" value="ECO:0007669"/>
    <property type="project" value="UniProtKB-KW"/>
</dbReference>
<dbReference type="GO" id="GO:0009251">
    <property type="term" value="P:glucan catabolic process"/>
    <property type="evidence" value="ECO:0007669"/>
    <property type="project" value="TreeGrafter"/>
</dbReference>
<dbReference type="FunFam" id="3.20.20.80:FF:000033">
    <property type="entry name" value="Glucan 1,3-beta-glucosidase A"/>
    <property type="match status" value="1"/>
</dbReference>
<dbReference type="Gene3D" id="3.20.20.80">
    <property type="entry name" value="Glycosidases"/>
    <property type="match status" value="1"/>
</dbReference>
<dbReference type="InterPro" id="IPR001547">
    <property type="entry name" value="Glyco_hydro_5"/>
</dbReference>
<dbReference type="InterPro" id="IPR017853">
    <property type="entry name" value="Glycoside_hydrolase_SF"/>
</dbReference>
<dbReference type="InterPro" id="IPR050386">
    <property type="entry name" value="Glycosyl_hydrolase_5"/>
</dbReference>
<dbReference type="PANTHER" id="PTHR31297:SF1">
    <property type="entry name" value="GLUCAN 1,3-BETA-GLUCOSIDASE I_II-RELATED"/>
    <property type="match status" value="1"/>
</dbReference>
<dbReference type="PANTHER" id="PTHR31297">
    <property type="entry name" value="GLUCAN ENDO-1,6-BETA-GLUCOSIDASE B"/>
    <property type="match status" value="1"/>
</dbReference>
<dbReference type="Pfam" id="PF00150">
    <property type="entry name" value="Cellulase"/>
    <property type="match status" value="1"/>
</dbReference>
<dbReference type="SUPFAM" id="SSF51445">
    <property type="entry name" value="(Trans)glycosidases"/>
    <property type="match status" value="1"/>
</dbReference>
<reference key="1">
    <citation type="journal article" date="2008" name="PLoS Genet.">
        <title>Genomic islands in the pathogenic filamentous fungus Aspergillus fumigatus.</title>
        <authorList>
            <person name="Fedorova N.D."/>
            <person name="Khaldi N."/>
            <person name="Joardar V.S."/>
            <person name="Maiti R."/>
            <person name="Amedeo P."/>
            <person name="Anderson M.J."/>
            <person name="Crabtree J."/>
            <person name="Silva J.C."/>
            <person name="Badger J.H."/>
            <person name="Albarraq A."/>
            <person name="Angiuoli S."/>
            <person name="Bussey H."/>
            <person name="Bowyer P."/>
            <person name="Cotty P.J."/>
            <person name="Dyer P.S."/>
            <person name="Egan A."/>
            <person name="Galens K."/>
            <person name="Fraser-Liggett C.M."/>
            <person name="Haas B.J."/>
            <person name="Inman J.M."/>
            <person name="Kent R."/>
            <person name="Lemieux S."/>
            <person name="Malavazi I."/>
            <person name="Orvis J."/>
            <person name="Roemer T."/>
            <person name="Ronning C.M."/>
            <person name="Sundaram J.P."/>
            <person name="Sutton G."/>
            <person name="Turner G."/>
            <person name="Venter J.C."/>
            <person name="White O.R."/>
            <person name="Whitty B.R."/>
            <person name="Youngman P."/>
            <person name="Wolfe K.H."/>
            <person name="Goldman G.H."/>
            <person name="Wortman J.R."/>
            <person name="Jiang B."/>
            <person name="Denning D.W."/>
            <person name="Nierman W.C."/>
        </authorList>
    </citation>
    <scope>NUCLEOTIDE SEQUENCE [LARGE SCALE GENOMIC DNA]</scope>
    <source>
        <strain>ATCC 1007 / CBS 513.65 / DSM 816 / NCTC 3887 / NRRL 1 / QM 1276 / 107</strain>
    </source>
</reference>
<gene>
    <name type="primary">exgA</name>
    <name type="synonym">exg1</name>
    <name type="ORF">ACLA_031040</name>
</gene>
<keyword id="KW-0119">Carbohydrate metabolism</keyword>
<keyword id="KW-0961">Cell wall biogenesis/degradation</keyword>
<keyword id="KW-1015">Disulfide bond</keyword>
<keyword id="KW-0326">Glycosidase</keyword>
<keyword id="KW-0378">Hydrolase</keyword>
<keyword id="KW-0464">Manganese</keyword>
<keyword id="KW-0479">Metal-binding</keyword>
<keyword id="KW-0624">Polysaccharide degradation</keyword>
<keyword id="KW-1185">Reference proteome</keyword>
<keyword id="KW-0964">Secreted</keyword>
<keyword id="KW-0732">Signal</keyword>
<protein>
    <recommendedName>
        <fullName>Probable glucan 1,3-beta-glucosidase A</fullName>
        <ecNumber>3.2.1.58</ecNumber>
    </recommendedName>
    <alternativeName>
        <fullName>Exo-1,3-beta-glucanase 1</fullName>
    </alternativeName>
    <alternativeName>
        <fullName>Exo-1,3-beta-glucanase A</fullName>
    </alternativeName>
</protein>